<reference key="1">
    <citation type="journal article" date="2010" name="J. Bacteriol.">
        <title>Genome sequence of the dioxin-mineralizing bacterium Sphingomonas wittichii RW1.</title>
        <authorList>
            <person name="Miller T.R."/>
            <person name="Delcher A.L."/>
            <person name="Salzberg S.L."/>
            <person name="Saunders E."/>
            <person name="Detter J.C."/>
            <person name="Halden R.U."/>
        </authorList>
    </citation>
    <scope>NUCLEOTIDE SEQUENCE [LARGE SCALE GENOMIC DNA]</scope>
    <source>
        <strain>DSM 6014 / CCUG 31198 / JCM 15750 / NBRC 105917 / EY 4224 / RW1</strain>
    </source>
</reference>
<feature type="chain" id="PRO_0000323953" description="Uridylate kinase">
    <location>
        <begin position="1"/>
        <end position="237"/>
    </location>
</feature>
<feature type="binding site" evidence="1">
    <location>
        <begin position="12"/>
        <end position="15"/>
    </location>
    <ligand>
        <name>ATP</name>
        <dbReference type="ChEBI" id="CHEBI:30616"/>
    </ligand>
</feature>
<feature type="binding site" evidence="1">
    <location>
        <position position="53"/>
    </location>
    <ligand>
        <name>UMP</name>
        <dbReference type="ChEBI" id="CHEBI:57865"/>
    </ligand>
</feature>
<feature type="binding site" evidence="1">
    <location>
        <position position="54"/>
    </location>
    <ligand>
        <name>ATP</name>
        <dbReference type="ChEBI" id="CHEBI:30616"/>
    </ligand>
</feature>
<feature type="binding site" evidence="1">
    <location>
        <position position="58"/>
    </location>
    <ligand>
        <name>ATP</name>
        <dbReference type="ChEBI" id="CHEBI:30616"/>
    </ligand>
</feature>
<feature type="binding site" evidence="1">
    <location>
        <position position="73"/>
    </location>
    <ligand>
        <name>UMP</name>
        <dbReference type="ChEBI" id="CHEBI:57865"/>
    </ligand>
</feature>
<feature type="binding site" evidence="1">
    <location>
        <begin position="134"/>
        <end position="141"/>
    </location>
    <ligand>
        <name>UMP</name>
        <dbReference type="ChEBI" id="CHEBI:57865"/>
    </ligand>
</feature>
<feature type="binding site" evidence="1">
    <location>
        <position position="161"/>
    </location>
    <ligand>
        <name>ATP</name>
        <dbReference type="ChEBI" id="CHEBI:30616"/>
    </ligand>
</feature>
<feature type="binding site" evidence="1">
    <location>
        <position position="167"/>
    </location>
    <ligand>
        <name>ATP</name>
        <dbReference type="ChEBI" id="CHEBI:30616"/>
    </ligand>
</feature>
<feature type="binding site" evidence="1">
    <location>
        <position position="170"/>
    </location>
    <ligand>
        <name>ATP</name>
        <dbReference type="ChEBI" id="CHEBI:30616"/>
    </ligand>
</feature>
<protein>
    <recommendedName>
        <fullName evidence="1">Uridylate kinase</fullName>
        <shortName evidence="1">UK</shortName>
        <ecNumber evidence="1">2.7.4.22</ecNumber>
    </recommendedName>
    <alternativeName>
        <fullName evidence="1">Uridine monophosphate kinase</fullName>
        <shortName evidence="1">UMP kinase</shortName>
        <shortName evidence="1">UMPK</shortName>
    </alternativeName>
</protein>
<sequence>MDRPRFKRILLKLSGEVLMGQGQFGIDPETVARVAREIADVATHYELCLVVGGGNIFRGLAAAAKGFDRTSADYMGMLATVMNALAVQNALEQIGVDTRVQSAIPMSTVCEPFIRRRAERHLEKGRIVIFAAGTGNPYFTTDSAAALRAAEMGCDALFKGTSVDGVYNADPKKDPTAIRYETVTFNRVLADDLKVMDASAVALCRDNNIPIVVFNIREQGNLARVLAGSGTATTVQN</sequence>
<comment type="function">
    <text evidence="1">Catalyzes the reversible phosphorylation of UMP to UDP.</text>
</comment>
<comment type="catalytic activity">
    <reaction evidence="1">
        <text>UMP + ATP = UDP + ADP</text>
        <dbReference type="Rhea" id="RHEA:24400"/>
        <dbReference type="ChEBI" id="CHEBI:30616"/>
        <dbReference type="ChEBI" id="CHEBI:57865"/>
        <dbReference type="ChEBI" id="CHEBI:58223"/>
        <dbReference type="ChEBI" id="CHEBI:456216"/>
        <dbReference type="EC" id="2.7.4.22"/>
    </reaction>
</comment>
<comment type="activity regulation">
    <text evidence="1">Inhibited by UTP.</text>
</comment>
<comment type="pathway">
    <text evidence="1">Pyrimidine metabolism; CTP biosynthesis via de novo pathway; UDP from UMP (UMPK route): step 1/1.</text>
</comment>
<comment type="subunit">
    <text evidence="1">Homohexamer.</text>
</comment>
<comment type="subcellular location">
    <subcellularLocation>
        <location evidence="1">Cytoplasm</location>
    </subcellularLocation>
</comment>
<comment type="similarity">
    <text evidence="1">Belongs to the UMP kinase family.</text>
</comment>
<evidence type="ECO:0000255" key="1">
    <source>
        <dbReference type="HAMAP-Rule" id="MF_01220"/>
    </source>
</evidence>
<name>PYRH_RHIWR</name>
<gene>
    <name evidence="1" type="primary">pyrH</name>
    <name type="ordered locus">Swit_0462</name>
</gene>
<proteinExistence type="inferred from homology"/>
<accession>A5V3G4</accession>
<dbReference type="EC" id="2.7.4.22" evidence="1"/>
<dbReference type="EMBL" id="CP000699">
    <property type="protein sequence ID" value="ABQ66830.1"/>
    <property type="molecule type" value="Genomic_DNA"/>
</dbReference>
<dbReference type="SMR" id="A5V3G4"/>
<dbReference type="STRING" id="392499.Swit_0462"/>
<dbReference type="PaxDb" id="392499-Swit_0462"/>
<dbReference type="KEGG" id="swi:Swit_0462"/>
<dbReference type="eggNOG" id="COG0528">
    <property type="taxonomic scope" value="Bacteria"/>
</dbReference>
<dbReference type="HOGENOM" id="CLU_033861_0_0_5"/>
<dbReference type="OrthoDB" id="9807458at2"/>
<dbReference type="UniPathway" id="UPA00159">
    <property type="reaction ID" value="UER00275"/>
</dbReference>
<dbReference type="Proteomes" id="UP000001989">
    <property type="component" value="Chromosome"/>
</dbReference>
<dbReference type="GO" id="GO:0005829">
    <property type="term" value="C:cytosol"/>
    <property type="evidence" value="ECO:0007669"/>
    <property type="project" value="TreeGrafter"/>
</dbReference>
<dbReference type="GO" id="GO:0005524">
    <property type="term" value="F:ATP binding"/>
    <property type="evidence" value="ECO:0007669"/>
    <property type="project" value="UniProtKB-KW"/>
</dbReference>
<dbReference type="GO" id="GO:0033862">
    <property type="term" value="F:UMP kinase activity"/>
    <property type="evidence" value="ECO:0007669"/>
    <property type="project" value="UniProtKB-EC"/>
</dbReference>
<dbReference type="GO" id="GO:0044210">
    <property type="term" value="P:'de novo' CTP biosynthetic process"/>
    <property type="evidence" value="ECO:0007669"/>
    <property type="project" value="UniProtKB-UniRule"/>
</dbReference>
<dbReference type="GO" id="GO:0006225">
    <property type="term" value="P:UDP biosynthetic process"/>
    <property type="evidence" value="ECO:0007669"/>
    <property type="project" value="TreeGrafter"/>
</dbReference>
<dbReference type="CDD" id="cd04254">
    <property type="entry name" value="AAK_UMPK-PyrH-Ec"/>
    <property type="match status" value="1"/>
</dbReference>
<dbReference type="FunFam" id="3.40.1160.10:FF:000001">
    <property type="entry name" value="Uridylate kinase"/>
    <property type="match status" value="1"/>
</dbReference>
<dbReference type="Gene3D" id="3.40.1160.10">
    <property type="entry name" value="Acetylglutamate kinase-like"/>
    <property type="match status" value="1"/>
</dbReference>
<dbReference type="HAMAP" id="MF_01220_B">
    <property type="entry name" value="PyrH_B"/>
    <property type="match status" value="1"/>
</dbReference>
<dbReference type="InterPro" id="IPR036393">
    <property type="entry name" value="AceGlu_kinase-like_sf"/>
</dbReference>
<dbReference type="InterPro" id="IPR001048">
    <property type="entry name" value="Asp/Glu/Uridylate_kinase"/>
</dbReference>
<dbReference type="InterPro" id="IPR011817">
    <property type="entry name" value="Uridylate_kinase"/>
</dbReference>
<dbReference type="InterPro" id="IPR015963">
    <property type="entry name" value="Uridylate_kinase_bac"/>
</dbReference>
<dbReference type="NCBIfam" id="TIGR02075">
    <property type="entry name" value="pyrH_bact"/>
    <property type="match status" value="1"/>
</dbReference>
<dbReference type="PANTHER" id="PTHR42833">
    <property type="entry name" value="URIDYLATE KINASE"/>
    <property type="match status" value="1"/>
</dbReference>
<dbReference type="PANTHER" id="PTHR42833:SF4">
    <property type="entry name" value="URIDYLATE KINASE PUMPKIN, CHLOROPLASTIC"/>
    <property type="match status" value="1"/>
</dbReference>
<dbReference type="Pfam" id="PF00696">
    <property type="entry name" value="AA_kinase"/>
    <property type="match status" value="1"/>
</dbReference>
<dbReference type="PIRSF" id="PIRSF005650">
    <property type="entry name" value="Uridylate_kin"/>
    <property type="match status" value="1"/>
</dbReference>
<dbReference type="SUPFAM" id="SSF53633">
    <property type="entry name" value="Carbamate kinase-like"/>
    <property type="match status" value="1"/>
</dbReference>
<keyword id="KW-0067">ATP-binding</keyword>
<keyword id="KW-0963">Cytoplasm</keyword>
<keyword id="KW-0418">Kinase</keyword>
<keyword id="KW-0547">Nucleotide-binding</keyword>
<keyword id="KW-0665">Pyrimidine biosynthesis</keyword>
<keyword id="KW-1185">Reference proteome</keyword>
<keyword id="KW-0808">Transferase</keyword>
<organism>
    <name type="scientific">Rhizorhabdus wittichii (strain DSM 6014 / CCUG 31198 / JCM 15750 / NBRC 105917 / EY 4224 / RW1)</name>
    <name type="common">Sphingomonas wittichii</name>
    <dbReference type="NCBI Taxonomy" id="392499"/>
    <lineage>
        <taxon>Bacteria</taxon>
        <taxon>Pseudomonadati</taxon>
        <taxon>Pseudomonadota</taxon>
        <taxon>Alphaproteobacteria</taxon>
        <taxon>Sphingomonadales</taxon>
        <taxon>Sphingomonadaceae</taxon>
        <taxon>Rhizorhabdus</taxon>
    </lineage>
</organism>